<gene>
    <name type="ordered locus">Ava_3988</name>
</gene>
<proteinExistence type="evidence at protein level"/>
<sequence length="567" mass="61741">MKTLSQAQSKTSSQQFSFTGNSSANVIIGNQKLTINDVARVARNGTLVSLTNNTDILQGIQASCDYINNAVESGEPIYGVTSGFGGMANVAISREQASELQTNLVWFLKTGAGNKLPLADVRAAMLLRANSHMRGASGIRLELIKRMEIFLNAGVTPYVYEFGSIGASGDLVPLSYITGSLIGLDPSFKVDFNGKEMDAPTALRQLNLSPLTLLPKEGLAMMNGTSVMTGIAANCVYDTQILTAIAMGVHALDIQALNGTNQSFHPFIHNSKPHPGQLWAADQMISLLANSQLVRDELDGKHDYRDHELIQDRYSLRCLPQYLGPIVDGISQIAKQIEIEINSVTDNPLIDVDNQASYHGGNFLGQYVGMGMDHLRYYIGLLAKHLDVQIALLASPEFSNGLPPSLLGNRERKVNMGLKGLQICGNSIMPLLTFYGNSIADRFPTHAEQFNQNINSQGYTSATLARRSVDIFQNYVAIALMFGVQAVDLRTYKKTGHYDARACLSPATERLYSAVRHVVGQKPTSDRPYIWNDNEQGLDEHIARISADIAAGGVIVQAVQDILPCLH</sequence>
<organism>
    <name type="scientific">Trichormus variabilis (strain ATCC 29413 / PCC 7937)</name>
    <name type="common">Anabaena variabilis</name>
    <dbReference type="NCBI Taxonomy" id="240292"/>
    <lineage>
        <taxon>Bacteria</taxon>
        <taxon>Bacillati</taxon>
        <taxon>Cyanobacteriota</taxon>
        <taxon>Cyanophyceae</taxon>
        <taxon>Nostocales</taxon>
        <taxon>Nostocaceae</taxon>
        <taxon>Trichormus</taxon>
    </lineage>
</organism>
<name>PAL_TRIV2</name>
<dbReference type="EC" id="4.3.1.24" evidence="3 4"/>
<dbReference type="EMBL" id="CP000117">
    <property type="protein sequence ID" value="ABA23593.1"/>
    <property type="molecule type" value="Genomic_DNA"/>
</dbReference>
<dbReference type="PDB" id="2NYN">
    <property type="method" value="X-ray"/>
    <property type="resolution" value="1.90 A"/>
    <property type="chains" value="A/B/C/D=1-567"/>
</dbReference>
<dbReference type="PDB" id="3CZO">
    <property type="method" value="X-ray"/>
    <property type="resolution" value="2.20 A"/>
    <property type="chains" value="A/B/C/D=25-567"/>
</dbReference>
<dbReference type="PDB" id="5LTM">
    <property type="method" value="X-ray"/>
    <property type="resolution" value="2.41 A"/>
    <property type="chains" value="A/B=25-563"/>
</dbReference>
<dbReference type="PDBsum" id="2NYN"/>
<dbReference type="PDBsum" id="3CZO"/>
<dbReference type="PDBsum" id="5LTM"/>
<dbReference type="SMR" id="Q3M5Z3"/>
<dbReference type="STRING" id="240292.Ava_3988"/>
<dbReference type="KEGG" id="ava:Ava_3988"/>
<dbReference type="eggNOG" id="COG2986">
    <property type="taxonomic scope" value="Bacteria"/>
</dbReference>
<dbReference type="HOGENOM" id="CLU_014801_3_2_3"/>
<dbReference type="BRENDA" id="4.3.1.24">
    <property type="organism ID" value="322"/>
</dbReference>
<dbReference type="UniPathway" id="UPA00713">
    <property type="reaction ID" value="UER00725"/>
</dbReference>
<dbReference type="EvolutionaryTrace" id="Q3M5Z3"/>
<dbReference type="Proteomes" id="UP000002533">
    <property type="component" value="Chromosome"/>
</dbReference>
<dbReference type="GO" id="GO:0005737">
    <property type="term" value="C:cytoplasm"/>
    <property type="evidence" value="ECO:0007669"/>
    <property type="project" value="UniProtKB-SubCell"/>
</dbReference>
<dbReference type="GO" id="GO:0045548">
    <property type="term" value="F:phenylalanine ammonia-lyase activity"/>
    <property type="evidence" value="ECO:0000314"/>
    <property type="project" value="UniProtKB"/>
</dbReference>
<dbReference type="GO" id="GO:0009072">
    <property type="term" value="P:aromatic amino acid metabolic process"/>
    <property type="evidence" value="ECO:0000314"/>
    <property type="project" value="UniProtKB"/>
</dbReference>
<dbReference type="GO" id="GO:0009800">
    <property type="term" value="P:cinnamic acid biosynthetic process"/>
    <property type="evidence" value="ECO:0000314"/>
    <property type="project" value="UniProtKB"/>
</dbReference>
<dbReference type="GO" id="GO:0006559">
    <property type="term" value="P:L-phenylalanine catabolic process"/>
    <property type="evidence" value="ECO:0007669"/>
    <property type="project" value="UniProtKB-KW"/>
</dbReference>
<dbReference type="GO" id="GO:0009699">
    <property type="term" value="P:phenylpropanoid biosynthetic process"/>
    <property type="evidence" value="ECO:0000314"/>
    <property type="project" value="UniProtKB"/>
</dbReference>
<dbReference type="GO" id="GO:0051289">
    <property type="term" value="P:protein homotetramerization"/>
    <property type="evidence" value="ECO:0000314"/>
    <property type="project" value="UniProtKB"/>
</dbReference>
<dbReference type="CDD" id="cd00332">
    <property type="entry name" value="PAL-HAL"/>
    <property type="match status" value="1"/>
</dbReference>
<dbReference type="FunFam" id="1.10.275.10:FF:000005">
    <property type="entry name" value="Histidine ammonia-lyase"/>
    <property type="match status" value="1"/>
</dbReference>
<dbReference type="FunFam" id="1.20.200.10:FF:000012">
    <property type="entry name" value="Tyrosine ammonia-lyase"/>
    <property type="match status" value="1"/>
</dbReference>
<dbReference type="Gene3D" id="1.20.200.10">
    <property type="entry name" value="Fumarase/aspartase (Central domain)"/>
    <property type="match status" value="1"/>
</dbReference>
<dbReference type="Gene3D" id="1.10.275.10">
    <property type="entry name" value="Fumarase/aspartase (N-terminal domain)"/>
    <property type="match status" value="1"/>
</dbReference>
<dbReference type="InterPro" id="IPR001106">
    <property type="entry name" value="Aromatic_Lyase"/>
</dbReference>
<dbReference type="InterPro" id="IPR024083">
    <property type="entry name" value="Fumarase/histidase_N"/>
</dbReference>
<dbReference type="InterPro" id="IPR008948">
    <property type="entry name" value="L-Aspartase-like"/>
</dbReference>
<dbReference type="InterPro" id="IPR022313">
    <property type="entry name" value="Phe/His_NH3-lyase_AS"/>
</dbReference>
<dbReference type="PANTHER" id="PTHR10362">
    <property type="entry name" value="HISTIDINE AMMONIA-LYASE"/>
    <property type="match status" value="1"/>
</dbReference>
<dbReference type="Pfam" id="PF00221">
    <property type="entry name" value="Lyase_aromatic"/>
    <property type="match status" value="1"/>
</dbReference>
<dbReference type="SUPFAM" id="SSF48557">
    <property type="entry name" value="L-aspartase-like"/>
    <property type="match status" value="1"/>
</dbReference>
<dbReference type="PROSITE" id="PS00488">
    <property type="entry name" value="PAL_HISTIDASE"/>
    <property type="match status" value="1"/>
</dbReference>
<accession>Q3M5Z3</accession>
<keyword id="KW-0002">3D-structure</keyword>
<keyword id="KW-0963">Cytoplasm</keyword>
<keyword id="KW-0456">Lyase</keyword>
<keyword id="KW-0585">Phenylalanine catabolism</keyword>
<keyword id="KW-0587">Phenylpropanoid metabolism</keyword>
<protein>
    <recommendedName>
        <fullName evidence="5">Phenylalanine ammonia-lyase</fullName>
        <ecNumber evidence="3 4">4.3.1.24</ecNumber>
    </recommendedName>
</protein>
<reference key="1">
    <citation type="journal article" date="2014" name="Stand. Genomic Sci.">
        <title>Complete genome sequence of Anabaena variabilis ATCC 29413.</title>
        <authorList>
            <person name="Thiel T."/>
            <person name="Pratte B.S."/>
            <person name="Zhong J."/>
            <person name="Goodwin L."/>
            <person name="Copeland A."/>
            <person name="Lucas S."/>
            <person name="Han C."/>
            <person name="Pitluck S."/>
            <person name="Land M.L."/>
            <person name="Kyrpides N.C."/>
            <person name="Woyke T."/>
        </authorList>
    </citation>
    <scope>NUCLEOTIDE SEQUENCE [LARGE SCALE GENOMIC DNA]</scope>
    <source>
        <strain>ATCC 29413 / PCC 7937</strain>
    </source>
</reference>
<reference key="2">
    <citation type="journal article" date="2007" name="Biochemistry">
        <title>Discovery of two cyanobacterial phenylalanine ammonia lyases: kinetic and structural characterization.</title>
        <authorList>
            <person name="Moffitt M.C."/>
            <person name="Louie G.V."/>
            <person name="Bowman M.E."/>
            <person name="Pence J."/>
            <person name="Noel J.P."/>
            <person name="Moore B.S."/>
        </authorList>
    </citation>
    <scope>X-RAY CRYSTALLOGRAPHY (1.90 ANGSTROMS)</scope>
    <scope>FUNCTION</scope>
    <scope>CATALYTIC ACTIVITY</scope>
    <scope>SUBUNIT</scope>
    <scope>BIOPHYSICOCHEMICAL PROPERTIES</scope>
    <scope>PTM</scope>
    <scope>DEHYDRATION AT SER-168</scope>
    <scope>MUTAGENESIS OF LEU-108</scope>
    <source>
        <strain>ATCC 29413 / PCC 7937</strain>
    </source>
</reference>
<reference key="3">
    <citation type="journal article" date="2008" name="J. Mol. Biol.">
        <title>Structural and biochemical characterization of the therapeutic Anabaena variabilis phenylalanine ammonia lyase.</title>
        <authorList>
            <person name="Wang L."/>
            <person name="Gamez A."/>
            <person name="Archer H."/>
            <person name="Abola E.E."/>
            <person name="Sarkissian C.N."/>
            <person name="Fitzpatrick P."/>
            <person name="Wendt D."/>
            <person name="Zhang Y."/>
            <person name="Vellard M."/>
            <person name="Bliesath J."/>
            <person name="Bell S.M."/>
            <person name="Lemontt J.F."/>
            <person name="Scriver C.R."/>
            <person name="Stevens R.C."/>
        </authorList>
    </citation>
    <scope>X-RAY CRYSTALLOGRAPHY (2.20 ANGSTROMS) OF 25-567 OF MUTANT SER-503/SER-565</scope>
    <scope>MUTAGENESIS OF 1-MET--ASN-21; CYS-503 AND CYS-565</scope>
    <scope>CATALYTIC ACTIVITY</scope>
    <scope>FUNCTION</scope>
    <scope>BIOPHYSICOCHEMICAL PROPERTIES</scope>
    <scope>SUBUNIT</scope>
    <scope>PTM</scope>
    <source>
        <strain>ATCC 29413 / PCC 7937</strain>
    </source>
</reference>
<feature type="chain" id="PRO_0000429966" description="Phenylalanine ammonia-lyase">
    <location>
        <begin position="1"/>
        <end position="567"/>
    </location>
</feature>
<feature type="active site" description="Proton donor/acceptor" evidence="2">
    <location>
        <position position="78"/>
    </location>
</feature>
<feature type="binding site" evidence="2">
    <location>
        <position position="223"/>
    </location>
    <ligand>
        <name>(E)-cinnamate</name>
        <dbReference type="ChEBI" id="CHEBI:15669"/>
    </ligand>
</feature>
<feature type="binding site" evidence="2">
    <location>
        <position position="311"/>
    </location>
    <ligand>
        <name>(E)-cinnamate</name>
        <dbReference type="ChEBI" id="CHEBI:15669"/>
    </ligand>
</feature>
<feature type="binding site" evidence="2">
    <location>
        <position position="317"/>
    </location>
    <ligand>
        <name>(E)-cinnamate</name>
        <dbReference type="ChEBI" id="CHEBI:15669"/>
    </ligand>
</feature>
<feature type="binding site" evidence="2">
    <location>
        <position position="347"/>
    </location>
    <ligand>
        <name>(E)-cinnamate</name>
        <dbReference type="ChEBI" id="CHEBI:15669"/>
    </ligand>
</feature>
<feature type="binding site" evidence="1">
    <location>
        <position position="419"/>
    </location>
    <ligand>
        <name>(E)-cinnamate</name>
        <dbReference type="ChEBI" id="CHEBI:15669"/>
    </ligand>
</feature>
<feature type="binding site" evidence="1">
    <location>
        <position position="448"/>
    </location>
    <ligand>
        <name>(E)-cinnamate</name>
        <dbReference type="ChEBI" id="CHEBI:15669"/>
    </ligand>
</feature>
<feature type="binding site" evidence="2">
    <location>
        <position position="451"/>
    </location>
    <ligand>
        <name>(E)-cinnamate</name>
        <dbReference type="ChEBI" id="CHEBI:15669"/>
    </ligand>
</feature>
<feature type="modified residue" description="2,3-didehydroalanine (Ser)" evidence="3">
    <location>
        <position position="168"/>
    </location>
</feature>
<feature type="cross-link" description="5-imidazolinone (Ala-Gly)" evidence="3">
    <location>
        <begin position="167"/>
        <end position="169"/>
    </location>
</feature>
<feature type="mutagenesis site" description="No effect on enzyme activity." evidence="4">
    <location>
        <begin position="1"/>
        <end position="21"/>
    </location>
</feature>
<feature type="mutagenesis site" description="Slightly decreases catalytic rate." evidence="3">
    <original>L</original>
    <variation>A</variation>
    <location>
        <position position="108"/>
    </location>
</feature>
<feature type="mutagenesis site" description="Decreases catalytic rate." evidence="3">
    <original>L</original>
    <variation>G</variation>
    <location>
        <position position="108"/>
    </location>
</feature>
<feature type="mutagenesis site" description="Prevents formation of artifactual disulfide bonds and increases solubility; when associated with S-565." evidence="4">
    <original>C</original>
    <variation>S</variation>
    <location>
        <position position="503"/>
    </location>
</feature>
<feature type="mutagenesis site" description="Prevents formation of artifactual disulfide bonds and increases solubility; when associated with S-503." evidence="4">
    <original>C</original>
    <variation>S</variation>
    <location>
        <position position="565"/>
    </location>
</feature>
<feature type="strand" evidence="7">
    <location>
        <begin position="26"/>
        <end position="31"/>
    </location>
</feature>
<feature type="helix" evidence="7">
    <location>
        <begin position="35"/>
        <end position="44"/>
    </location>
</feature>
<feature type="strand" evidence="7">
    <location>
        <begin position="48"/>
        <end position="50"/>
    </location>
</feature>
<feature type="helix" evidence="7">
    <location>
        <begin position="54"/>
        <end position="71"/>
    </location>
</feature>
<feature type="turn" evidence="8">
    <location>
        <begin position="78"/>
        <end position="80"/>
    </location>
</feature>
<feature type="helix" evidence="8">
    <location>
        <begin position="85"/>
        <end position="87"/>
    </location>
</feature>
<feature type="helix" evidence="7">
    <location>
        <begin position="95"/>
        <end position="107"/>
    </location>
</feature>
<feature type="strand" evidence="7">
    <location>
        <begin position="112"/>
        <end position="115"/>
    </location>
</feature>
<feature type="helix" evidence="7">
    <location>
        <begin position="118"/>
        <end position="132"/>
    </location>
</feature>
<feature type="helix" evidence="7">
    <location>
        <begin position="141"/>
        <end position="153"/>
    </location>
</feature>
<feature type="strand" evidence="7">
    <location>
        <begin position="155"/>
        <end position="157"/>
    </location>
</feature>
<feature type="strand" evidence="7">
    <location>
        <begin position="160"/>
        <end position="163"/>
    </location>
</feature>
<feature type="helix" evidence="7">
    <location>
        <begin position="171"/>
        <end position="181"/>
    </location>
</feature>
<feature type="strand" evidence="7">
    <location>
        <begin position="188"/>
        <end position="192"/>
    </location>
</feature>
<feature type="strand" evidence="7">
    <location>
        <begin position="195"/>
        <end position="198"/>
    </location>
</feature>
<feature type="helix" evidence="7">
    <location>
        <begin position="199"/>
        <end position="205"/>
    </location>
</feature>
<feature type="helix" evidence="7">
    <location>
        <begin position="217"/>
        <end position="222"/>
    </location>
</feature>
<feature type="strand" evidence="7">
    <location>
        <begin position="223"/>
        <end position="225"/>
    </location>
</feature>
<feature type="helix" evidence="7">
    <location>
        <begin position="226"/>
        <end position="256"/>
    </location>
</feature>
<feature type="helix" evidence="7">
    <location>
        <begin position="262"/>
        <end position="264"/>
    </location>
</feature>
<feature type="helix" evidence="7">
    <location>
        <begin position="266"/>
        <end position="270"/>
    </location>
</feature>
<feature type="helix" evidence="7">
    <location>
        <begin position="275"/>
        <end position="288"/>
    </location>
</feature>
<feature type="strand" evidence="7">
    <location>
        <begin position="292"/>
        <end position="295"/>
    </location>
</feature>
<feature type="strand" evidence="8">
    <location>
        <begin position="306"/>
        <end position="308"/>
    </location>
</feature>
<feature type="helix" evidence="7">
    <location>
        <begin position="314"/>
        <end position="317"/>
    </location>
</feature>
<feature type="helix" evidence="7">
    <location>
        <begin position="319"/>
        <end position="341"/>
    </location>
</feature>
<feature type="strand" evidence="7">
    <location>
        <begin position="346"/>
        <end position="351"/>
    </location>
</feature>
<feature type="helix" evidence="7">
    <location>
        <begin position="352"/>
        <end position="354"/>
    </location>
</feature>
<feature type="strand" evidence="7">
    <location>
        <begin position="356"/>
        <end position="358"/>
    </location>
</feature>
<feature type="helix" evidence="7">
    <location>
        <begin position="366"/>
        <end position="394"/>
    </location>
</feature>
<feature type="turn" evidence="7">
    <location>
        <begin position="396"/>
        <end position="400"/>
    </location>
</feature>
<feature type="helix" evidence="7">
    <location>
        <begin position="404"/>
        <end position="406"/>
    </location>
</feature>
<feature type="helix" evidence="7">
    <location>
        <begin position="419"/>
        <end position="435"/>
    </location>
</feature>
<feature type="helix" evidence="7">
    <location>
        <begin position="440"/>
        <end position="442"/>
    </location>
</feature>
<feature type="turn" evidence="7">
    <location>
        <begin position="445"/>
        <end position="451"/>
    </location>
</feature>
<feature type="helix" evidence="7">
    <location>
        <begin position="458"/>
        <end position="495"/>
    </location>
</feature>
<feature type="strand" evidence="8">
    <location>
        <begin position="496"/>
        <end position="498"/>
    </location>
</feature>
<feature type="helix" evidence="7">
    <location>
        <begin position="500"/>
        <end position="502"/>
    </location>
</feature>
<feature type="helix" evidence="7">
    <location>
        <begin position="506"/>
        <end position="519"/>
    </location>
</feature>
<feature type="helix" evidence="7">
    <location>
        <begin position="533"/>
        <end position="535"/>
    </location>
</feature>
<feature type="helix" evidence="7">
    <location>
        <begin position="538"/>
        <end position="550"/>
    </location>
</feature>
<feature type="helix" evidence="7">
    <location>
        <begin position="554"/>
        <end position="557"/>
    </location>
</feature>
<feature type="helix" evidence="7">
    <location>
        <begin position="558"/>
        <end position="562"/>
    </location>
</feature>
<evidence type="ECO:0000250" key="1">
    <source>
        <dbReference type="UniProtKB" id="P11544"/>
    </source>
</evidence>
<evidence type="ECO:0000250" key="2">
    <source>
        <dbReference type="UniProtKB" id="Q68G84"/>
    </source>
</evidence>
<evidence type="ECO:0000269" key="3">
    <source>
    </source>
</evidence>
<evidence type="ECO:0000269" key="4">
    <source>
    </source>
</evidence>
<evidence type="ECO:0000303" key="5">
    <source>
    </source>
</evidence>
<evidence type="ECO:0000305" key="6"/>
<evidence type="ECO:0007829" key="7">
    <source>
        <dbReference type="PDB" id="2NYN"/>
    </source>
</evidence>
<evidence type="ECO:0007829" key="8">
    <source>
        <dbReference type="PDB" id="3CZO"/>
    </source>
</evidence>
<comment type="function">
    <text evidence="3 4">Catalyzes the non-oxidative deamination of L-phenylalanine to form trans-cinnamic acid, the first step in the phenylpropanoid pathway.</text>
</comment>
<comment type="catalytic activity">
    <reaction evidence="3 4">
        <text>L-phenylalanine = (E)-cinnamate + NH4(+)</text>
        <dbReference type="Rhea" id="RHEA:21384"/>
        <dbReference type="ChEBI" id="CHEBI:15669"/>
        <dbReference type="ChEBI" id="CHEBI:28938"/>
        <dbReference type="ChEBI" id="CHEBI:58095"/>
        <dbReference type="EC" id="4.3.1.24"/>
    </reaction>
</comment>
<comment type="biophysicochemical properties">
    <kinetics>
        <KM evidence="3 4">0.06 mM for phenylalanine</KM>
        <text evidence="3 4">kcat is 4.3 sec(-1) for phenylalanine (PubMed:17240984). kcat is 4.6 sec(-1) for phenylalanine (PubMed:18556022). Retains activity after 10 minutes exposure to pH values between 4 and 12 (PubMed:18556022).</text>
    </kinetics>
    <phDependence>
        <text evidence="3 4">Optimum pH is 7.7-8.5.</text>
    </phDependence>
</comment>
<comment type="pathway">
    <text>Phenylpropanoid metabolism; trans-cinnamate biosynthesis; trans-cinnamate from L-phenylalanine: step 1/1.</text>
</comment>
<comment type="subunit">
    <text evidence="3 4">Homotetramer.</text>
</comment>
<comment type="subcellular location">
    <subcellularLocation>
        <location evidence="6">Cytoplasm</location>
    </subcellularLocation>
</comment>
<comment type="PTM">
    <text evidence="2">Contains an active site 4-methylidene-imidazol-5-one (MIO), which is formed autocatalytically by cyclization and dehydration of residues Ala-Ser-Gly.</text>
</comment>
<comment type="similarity">
    <text evidence="6">Belongs to the PAL/histidase family.</text>
</comment>